<protein>
    <recommendedName>
        <fullName evidence="1">UPF0210 protein llmg_1581</fullName>
    </recommendedName>
</protein>
<feature type="chain" id="PRO_1000066755" description="UPF0210 protein llmg_1581">
    <location>
        <begin position="1"/>
        <end position="445"/>
    </location>
</feature>
<comment type="subunit">
    <text evidence="1">Homodimer.</text>
</comment>
<comment type="similarity">
    <text evidence="1">Belongs to the UPF0210 family.</text>
</comment>
<organism>
    <name type="scientific">Lactococcus lactis subsp. cremoris (strain MG1363)</name>
    <dbReference type="NCBI Taxonomy" id="416870"/>
    <lineage>
        <taxon>Bacteria</taxon>
        <taxon>Bacillati</taxon>
        <taxon>Bacillota</taxon>
        <taxon>Bacilli</taxon>
        <taxon>Lactobacillales</taxon>
        <taxon>Streptococcaceae</taxon>
        <taxon>Lactococcus</taxon>
        <taxon>Lactococcus cremoris subsp. cremoris</taxon>
    </lineage>
</organism>
<name>Y1581_LACLM</name>
<reference key="1">
    <citation type="journal article" date="2007" name="J. Bacteriol.">
        <title>The complete genome sequence of the lactic acid bacterial paradigm Lactococcus lactis subsp. cremoris MG1363.</title>
        <authorList>
            <person name="Wegmann U."/>
            <person name="O'Connell-Motherway M."/>
            <person name="Zomer A."/>
            <person name="Buist G."/>
            <person name="Shearman C."/>
            <person name="Canchaya C."/>
            <person name="Ventura M."/>
            <person name="Goesmann A."/>
            <person name="Gasson M.J."/>
            <person name="Kuipers O.P."/>
            <person name="van Sinderen D."/>
            <person name="Kok J."/>
        </authorList>
    </citation>
    <scope>NUCLEOTIDE SEQUENCE [LARGE SCALE GENOMIC DNA]</scope>
    <source>
        <strain>MG1363</strain>
    </source>
</reference>
<dbReference type="EMBL" id="AM406671">
    <property type="protein sequence ID" value="CAL98156.1"/>
    <property type="molecule type" value="Genomic_DNA"/>
</dbReference>
<dbReference type="RefSeq" id="WP_011835415.1">
    <property type="nucleotide sequence ID" value="NC_009004.1"/>
</dbReference>
<dbReference type="SMR" id="A2RLI8"/>
<dbReference type="STRING" id="416870.llmg_1581"/>
<dbReference type="KEGG" id="llm:llmg_1581"/>
<dbReference type="eggNOG" id="COG2848">
    <property type="taxonomic scope" value="Bacteria"/>
</dbReference>
<dbReference type="HOGENOM" id="CLU_048704_0_0_9"/>
<dbReference type="OrthoDB" id="9763001at2"/>
<dbReference type="PhylomeDB" id="A2RLI8"/>
<dbReference type="Proteomes" id="UP000000364">
    <property type="component" value="Chromosome"/>
</dbReference>
<dbReference type="CDD" id="cd08025">
    <property type="entry name" value="RNR_PFL_like_DUF711"/>
    <property type="match status" value="1"/>
</dbReference>
<dbReference type="Gene3D" id="3.20.70.20">
    <property type="match status" value="1"/>
</dbReference>
<dbReference type="HAMAP" id="MF_01221">
    <property type="entry name" value="UPF0210"/>
    <property type="match status" value="1"/>
</dbReference>
<dbReference type="InterPro" id="IPR007841">
    <property type="entry name" value="UPF0210"/>
</dbReference>
<dbReference type="NCBIfam" id="NF003700">
    <property type="entry name" value="PRK05313.1"/>
    <property type="match status" value="1"/>
</dbReference>
<dbReference type="PANTHER" id="PTHR37560:SF1">
    <property type="entry name" value="UPF0210 PROTEIN MJ1665"/>
    <property type="match status" value="1"/>
</dbReference>
<dbReference type="PANTHER" id="PTHR37560">
    <property type="entry name" value="UPF0210 PROTEIN SPR0218"/>
    <property type="match status" value="1"/>
</dbReference>
<dbReference type="Pfam" id="PF05167">
    <property type="entry name" value="DUF711"/>
    <property type="match status" value="1"/>
</dbReference>
<dbReference type="SUPFAM" id="SSF51998">
    <property type="entry name" value="PFL-like glycyl radical enzymes"/>
    <property type="match status" value="1"/>
</dbReference>
<accession>A2RLI8</accession>
<evidence type="ECO:0000255" key="1">
    <source>
        <dbReference type="HAMAP-Rule" id="MF_01221"/>
    </source>
</evidence>
<gene>
    <name type="ordered locus">llmg_1581</name>
</gene>
<sequence length="445" mass="46774">MDIQNIKETIAMIEEQNFDIRTITMGISLLDCIDADIDKTAEKIYQKIVNKAGKLVEVGNEIGHELGIKIVNKRVSVTPIAIIGAATAADDYTPLALAMDRAAKEIGIDFIGGYSALVQKGYQKGDEILIKSMPKALAATERVCASVNVGSTKSGINMTAVRDMGETIKIMSKGDKWLNAKLVVFANAVEDNPFMAGAFHGVGEADTIINVGVSGPGVVKRALEKVRGESFDILAETIKKTAFKITRIGQLVGQMASERLNVEFGIVDLSLAPTPAIGDSVARVLEEMGLETVGTHGTTAALAMLNDAVKKGGVMAAERVGGLSGAFIPVSEDEGMIAAVNSGALNIEKLEAMTCVCSVGLDMIAIPEETPASTIAAMIADEAAIGVINQKTTAVRIIPMGKEGEQIEFGGLFGVAPVMRVNKASSADFIARGGQIPAPIHSFKN</sequence>
<proteinExistence type="inferred from homology"/>